<name>LIVB8_BRUAB</name>
<accession>Q577I2</accession>
<proteinExistence type="inferred from homology"/>
<comment type="function">
    <text evidence="2">Component of an amino-acid transport system.</text>
</comment>
<comment type="similarity">
    <text evidence="2">Belongs to the leucine-binding protein family.</text>
</comment>
<sequence length="403" mass="42457">MRLSRLLIGASLGVALSSTVFTAALADVKFGSLYPISGSLALLGEESARGLELAVDEVNAAGGIKGEKVVLERGDAVDNNQATGEARRLISLVGVKAIFGTYSSARVIAASQVSELAGIPYFEMGAVADEVTGRGLQYLFRTNPTAENMAKDSVDMLIKGIAPGLGKDPKDMKIGIIYEDSSYGTSVAGHQEDNAKAAGLTVVLKSGYPSNTVDMSSLVLELREKGADVVMQTSYQNDSVLFLQQANEAGYKPLAIIGGGGGYSMQPTADAVGHDLIDGVFDADYTQYAVNTSATPGLTEFVEAYKAKYGSQPRSGHSLTNYVGAKAIFQALNAGEGFEPDQIVSAVKALDIPDGQTAAGYGVKFGKNNQNERATMMGMQWQDGKLVTVYPENAAIAKMRFKK</sequence>
<gene>
    <name type="ordered locus">BruAb2_0809</name>
</gene>
<feature type="signal peptide" evidence="1">
    <location>
        <begin position="1"/>
        <end position="26"/>
    </location>
</feature>
<feature type="chain" id="PRO_0000285745" description="Leu/Ile/Val-binding protein homolog 8">
    <location>
        <begin position="27"/>
        <end position="403"/>
    </location>
</feature>
<protein>
    <recommendedName>
        <fullName>Leu/Ile/Val-binding protein homolog 8</fullName>
    </recommendedName>
</protein>
<dbReference type="EMBL" id="AE017224">
    <property type="protein sequence ID" value="AAX76202.1"/>
    <property type="molecule type" value="Genomic_DNA"/>
</dbReference>
<dbReference type="RefSeq" id="WP_002966215.1">
    <property type="nucleotide sequence ID" value="NC_006933.1"/>
</dbReference>
<dbReference type="SMR" id="Q577I2"/>
<dbReference type="EnsemblBacteria" id="AAX76202">
    <property type="protein sequence ID" value="AAX76202"/>
    <property type="gene ID" value="BruAb2_0809"/>
</dbReference>
<dbReference type="KEGG" id="bmb:BruAb2_0809"/>
<dbReference type="HOGENOM" id="CLU_027128_4_0_5"/>
<dbReference type="Proteomes" id="UP000000540">
    <property type="component" value="Chromosome II"/>
</dbReference>
<dbReference type="GO" id="GO:0006865">
    <property type="term" value="P:amino acid transport"/>
    <property type="evidence" value="ECO:0007669"/>
    <property type="project" value="UniProtKB-KW"/>
</dbReference>
<dbReference type="CDD" id="cd06340">
    <property type="entry name" value="PBP1_ABC_ligand_binding-like"/>
    <property type="match status" value="1"/>
</dbReference>
<dbReference type="Gene3D" id="3.40.50.2300">
    <property type="match status" value="2"/>
</dbReference>
<dbReference type="InterPro" id="IPR051010">
    <property type="entry name" value="BCAA_transport"/>
</dbReference>
<dbReference type="InterPro" id="IPR028081">
    <property type="entry name" value="Leu-bd"/>
</dbReference>
<dbReference type="InterPro" id="IPR000709">
    <property type="entry name" value="Leu_Ile_Val-bd"/>
</dbReference>
<dbReference type="InterPro" id="IPR028082">
    <property type="entry name" value="Peripla_BP_I"/>
</dbReference>
<dbReference type="PANTHER" id="PTHR30483:SF37">
    <property type="entry name" value="ABC TRANSPORTER SUBSTRATE-BINDING PROTEIN"/>
    <property type="match status" value="1"/>
</dbReference>
<dbReference type="PANTHER" id="PTHR30483">
    <property type="entry name" value="LEUCINE-SPECIFIC-BINDING PROTEIN"/>
    <property type="match status" value="1"/>
</dbReference>
<dbReference type="Pfam" id="PF13458">
    <property type="entry name" value="Peripla_BP_6"/>
    <property type="match status" value="1"/>
</dbReference>
<dbReference type="PRINTS" id="PR00337">
    <property type="entry name" value="LEUILEVALBP"/>
</dbReference>
<dbReference type="SUPFAM" id="SSF53822">
    <property type="entry name" value="Periplasmic binding protein-like I"/>
    <property type="match status" value="1"/>
</dbReference>
<reference key="1">
    <citation type="journal article" date="2005" name="J. Bacteriol.">
        <title>Completion of the genome sequence of Brucella abortus and comparison to the highly similar genomes of Brucella melitensis and Brucella suis.</title>
        <authorList>
            <person name="Halling S.M."/>
            <person name="Peterson-Burch B.D."/>
            <person name="Bricker B.J."/>
            <person name="Zuerner R.L."/>
            <person name="Qing Z."/>
            <person name="Li L.-L."/>
            <person name="Kapur V."/>
            <person name="Alt D.P."/>
            <person name="Olsen S.C."/>
        </authorList>
    </citation>
    <scope>NUCLEOTIDE SEQUENCE [LARGE SCALE GENOMIC DNA]</scope>
    <source>
        <strain>9-941</strain>
    </source>
</reference>
<organism>
    <name type="scientific">Brucella abortus biovar 1 (strain 9-941)</name>
    <dbReference type="NCBI Taxonomy" id="262698"/>
    <lineage>
        <taxon>Bacteria</taxon>
        <taxon>Pseudomonadati</taxon>
        <taxon>Pseudomonadota</taxon>
        <taxon>Alphaproteobacteria</taxon>
        <taxon>Hyphomicrobiales</taxon>
        <taxon>Brucellaceae</taxon>
        <taxon>Brucella/Ochrobactrum group</taxon>
        <taxon>Brucella</taxon>
    </lineage>
</organism>
<keyword id="KW-0029">Amino-acid transport</keyword>
<keyword id="KW-0732">Signal</keyword>
<keyword id="KW-0813">Transport</keyword>
<evidence type="ECO:0000255" key="1"/>
<evidence type="ECO:0000305" key="2"/>